<accession>Q8JNB4</accession>
<comment type="function">
    <molecule>Outer capsid protein VP4</molecule>
    <text evidence="1">Spike-forming protein that mediates virion attachment to the host epithelial cell receptors and plays a major role in cell penetration, determination of host range restriction and virulence. Rotavirus attachment and entry into the host cell probably involves multiple sequential contacts between the outer capsid proteins VP4 and VP7, and the cell receptors. It is subsequently lost, together with VP7, following virus entry into the host cell. Following entry into the host cell, low intracellular or intravesicular Ca(2+) concentration probably causes the calcium-stabilized VP7 trimers to dissociate from the virion. This step is probably necessary for the membrane-disrupting entry step and the release of VP4, which is locked onto the virion by VP7. During the virus exit from the host cell, VP4 seems to be required to target the newly formed virions to the host cell lipid rafts.</text>
</comment>
<comment type="function">
    <molecule>Outer capsid protein VP5*</molecule>
    <text evidence="1">Forms the spike 'foot' and 'body' and acts as a membrane permeabilization protein that mediates release of viral particles from endosomal compartments into the cytoplasm. During entry, the part of VP5* that protrudes from the virus folds back on itself and reorganizes from a local dimer to a trimer. This reorganization may be linked to membrane penetration by exposing VP5* hydrophobic region. In integrin-dependent strains, VP5* targets the integrin heterodimer ITGA2/ITGB1 for cell attachment.</text>
</comment>
<comment type="function">
    <molecule>Outer capsid protein VP8*</molecule>
    <text evidence="1">Forms the head of the spikes and mediates the recognition of specific host cell surface glycans. It is the viral hemagglutinin and an important target of neutralizing antibodies. In sialic acid-dependent strains, VP8* binds to host cell sialic acid, most probably a ganglioside, providing the initial contact. In some other strains, VP8* mediates the attachment to histo-blood group antigens (HBGAs) for viral entry.</text>
</comment>
<comment type="subunit">
    <molecule>Outer capsid protein VP4</molecule>
    <text evidence="1">Homotrimer. VP4 adopts a dimeric appearance above the capsid surface, while forming a trimeric base anchored inside the capsid layer. Only hints of the third molecule are observed above the capsid surface. It probably performs a series of molecular rearrangements during viral entry. Prior to trypsin cleavage, it is flexible. The priming trypsin cleavage triggers its rearrangement into rigid spikes with approximate two-fold symmetry of their protruding parts. After an unknown second triggering event, cleaved VP4 may undergo another rearrangement, in which two VP5* subunits fold back on themselves and join a third subunit to form a tightly associated trimer, shaped like a folded umbrella. Interacts with VP6. Interacts with VP7.</text>
</comment>
<comment type="subunit">
    <molecule>Outer capsid protein VP5*</molecule>
    <text evidence="1">Homotrimer. The trimer is coiled-coil stabilized by its C-terminus, however, its N-terminus, known as antigen domain or 'body', seems to be flexible allowing it to self-associate either as a dimer or a trimer.</text>
</comment>
<comment type="subcellular location">
    <molecule>Outer capsid protein VP4</molecule>
    <subcellularLocation>
        <location evidence="1">Virion</location>
    </subcellularLocation>
    <subcellularLocation>
        <location evidence="1">Host rough endoplasmic reticulum</location>
    </subcellularLocation>
    <subcellularLocation>
        <location evidence="1">Host cell membrane</location>
    </subcellularLocation>
    <subcellularLocation>
        <location evidence="1">Host cytoplasm</location>
        <location evidence="1">Host cytoskeleton</location>
    </subcellularLocation>
    <subcellularLocation>
        <location evidence="1">Host endoplasmic reticulum-Golgi intermediate compartment</location>
    </subcellularLocation>
    <text evidence="1">The outer layer contains 180 copies of VP4, grouped as 60 dimers. Immature double-layered particles assembled in the cytoplasm bud across the membrane of the endoplasmic reticulum, acquiring during this process a transient lipid membrane that is modified with the ER resident viral glycoproteins NSP4 and VP7; these enveloped particles also contain VP4. As the particles move towards the interior of the ER cisternae, the transient lipid membrane and the non-structural protein NSP4 are lost, while the virus surface proteins VP4 and VP7 rearrange to form the outermost virus protein layer, yielding mature infectious triple-layered particles. VP4 also seems to associate with lipid rafts of the host cell membrane probably for the exit of the virus from the infected cell by an alternate pathway.</text>
</comment>
<comment type="subcellular location">
    <molecule>Outer capsid protein VP8*</molecule>
    <subcellularLocation>
        <location evidence="1">Virion</location>
    </subcellularLocation>
    <text evidence="1">Outer capsid protein.</text>
</comment>
<comment type="subcellular location">
    <molecule>Outer capsid protein VP5*</molecule>
    <subcellularLocation>
        <location evidence="1">Virion</location>
    </subcellularLocation>
    <text evidence="1">Outer capsid protein.</text>
</comment>
<comment type="domain">
    <molecule>Outer capsid protein VP4</molecule>
    <text evidence="1">The VP4 spike is divided into a foot, a stalk and body, and a head.</text>
</comment>
<comment type="PTM">
    <molecule>Outer capsid protein VP4</molecule>
    <text evidence="1">Proteolytic cleavage by trypsin results in activation of VP4 functions and greatly increases infectivity. The penetration into the host cell is dependent on trypsin treatment of VP4. It produces two peptides, VP5* and VP8* that remain associated with the virion. Cleavage of VP4 by trypsin probably occurs in vivo in the lumen of the intestine prior to infection of enterocytes. Trypsin seems to be incorporated into the three-layered viral particles but remains inactive as long as the viral outer capsid is intact and would only be activated upon the solubilization of the latter.</text>
</comment>
<comment type="miscellaneous">
    <text evidence="2">This strain probably does not use sialic acid to attach to the host cell.</text>
</comment>
<comment type="miscellaneous">
    <text evidence="1">In group A rotaviruses, VP4 defines the P serotype.</text>
</comment>
<comment type="miscellaneous">
    <text evidence="1">Some rotavirus strains are neuraminidase-sensitive and require sialic acid to attach to the cell surface. Some rotavirus strains are integrin-dependent. Some rotavirus strains depend on ganglioside for their entry into the host cell. Hsp70 also seems to be involved in the entry of some strains.</text>
</comment>
<comment type="similarity">
    <text evidence="1">Belongs to the rotavirus VP4 family.</text>
</comment>
<evidence type="ECO:0000255" key="1">
    <source>
        <dbReference type="HAMAP-Rule" id="MF_04132"/>
    </source>
</evidence>
<evidence type="ECO:0000269" key="2">
    <source>
    </source>
</evidence>
<evidence type="ECO:0007829" key="3">
    <source>
        <dbReference type="PDB" id="7F0H"/>
    </source>
</evidence>
<protein>
    <recommendedName>
        <fullName evidence="1">Outer capsid protein VP4</fullName>
    </recommendedName>
    <alternativeName>
        <fullName evidence="1">Hemagglutinin</fullName>
    </alternativeName>
    <component>
        <recommendedName>
            <fullName evidence="1">Outer capsid protein VP8*</fullName>
        </recommendedName>
    </component>
    <component>
        <recommendedName>
            <fullName evidence="1">Outer capsid protein VP5*</fullName>
        </recommendedName>
    </component>
</protein>
<name>VP4_ROTW3</name>
<sequence length="776" mass="86571">MASLIYRQLLANSYAVDLSDEIQSVGSEKNQRVTVNPGPFAQTVYAPVNWGPGEVNDSTVVQPVLDGPYQPASFDLPVGNWMLLAPTGPGVVVEGTDNSGRWLSVILIEPGVTSETRTYTMFGSSKQVLVSNASDTKWKFVEMMKTAIDGDYAEWGTLLSDTKLYGMMKYGKRLFIYEGETPNATTKRYIVTNYASVEVRPYSDFYIISRSQESACTEYINNGLPPIQNTRNVVPVAIVSRSIKPREVQANEDIVVSKTSLWKEMQYNRDIIIRFKFDNSIIKSGGLGYKWAEISFKAANYQYNYMRDGEDVTAHTTCSVNGVNDFSFNGGSLPTDFAISRYEVIKENSYVYVDYWDDSQAFRNMVYVRSLAANLNDVMCSGGHYSFALPAGQWPVMKGGAVTLHTAGVTLSTQFTDYVSLNSLRFRFRLAAEEPSFTITRTRVSKLYGIPAANPNGGREYYEVAGRFSLISLVPSNDDYQTPIMNSVTVRQYLERHLNELREEFNNLSQEIAVSQLIDLAMLPLDMFSMFSGIESTVNAAKSMATNVMRKFKSSKLASSVSMLRDSLSDGASSIARSTSIRSIGSTASAWANISERTQDAVNEVATISSQVSQISGKLRLKEITTQTEGMNFDDVSGAVLKAKIDRSIQVDQNALPDVITEASEKFIRNRAYRVIDGDEAFEAGTDGRFFAYKVETLEEMPFNIEKFADLVTNSPVISAIIDFKTLKNLNDNYGITREQAFNLLRSNPKVLRGFIDQNNPIIKNRIEQLIMQCRL</sequence>
<feature type="chain" id="PRO_0000368134" description="Outer capsid protein VP4" evidence="1">
    <location>
        <begin position="1"/>
        <end position="776"/>
    </location>
</feature>
<feature type="chain" id="PRO_0000368135" description="Outer capsid protein VP8*" evidence="1">
    <location>
        <begin position="1"/>
        <end position="231"/>
    </location>
</feature>
<feature type="chain" id="PRO_0000368136" description="Outer capsid protein VP5*" evidence="1">
    <location>
        <begin position="247"/>
        <end position="776"/>
    </location>
</feature>
<feature type="region of interest" description="Spike head" evidence="1">
    <location>
        <begin position="65"/>
        <end position="224"/>
    </location>
</feature>
<feature type="region of interest" description="Spike body and stalk (antigen domain)" evidence="1">
    <location>
        <begin position="248"/>
        <end position="479"/>
    </location>
</feature>
<feature type="region of interest" description="Hydrophobic; possible role in virus entry into host cell" evidence="1">
    <location>
        <begin position="389"/>
        <end position="409"/>
    </location>
</feature>
<feature type="region of interest" description="Spike foot" evidence="1">
    <location>
        <begin position="510"/>
        <end position="776"/>
    </location>
</feature>
<feature type="coiled-coil region" evidence="1">
    <location>
        <begin position="491"/>
        <end position="518"/>
    </location>
</feature>
<feature type="short sequence motif" description="DGE motif; interaction with ITGA2/ITGB1 heterodimer" evidence="1">
    <location>
        <begin position="308"/>
        <end position="310"/>
    </location>
</feature>
<feature type="short sequence motif" description="KID motif; interaction with HSPA8" evidence="1">
    <location>
        <begin position="644"/>
        <end position="646"/>
    </location>
</feature>
<feature type="site" description="Cleavage" evidence="1">
    <location>
        <begin position="231"/>
        <end position="232"/>
    </location>
</feature>
<feature type="site" description="Cleavage" evidence="1">
    <location>
        <begin position="241"/>
        <end position="242"/>
    </location>
</feature>
<feature type="site" description="Probable cleavage" evidence="1">
    <location>
        <begin position="246"/>
        <end position="247"/>
    </location>
</feature>
<feature type="disulfide bond" evidence="1">
    <location>
        <begin position="318"/>
        <end position="380"/>
    </location>
</feature>
<feature type="strand" evidence="3">
    <location>
        <begin position="66"/>
        <end position="69"/>
    </location>
</feature>
<feature type="strand" evidence="3">
    <location>
        <begin position="80"/>
        <end position="84"/>
    </location>
</feature>
<feature type="strand" evidence="3">
    <location>
        <begin position="88"/>
        <end position="96"/>
    </location>
</feature>
<feature type="strand" evidence="3">
    <location>
        <begin position="98"/>
        <end position="100"/>
    </location>
</feature>
<feature type="strand" evidence="3">
    <location>
        <begin position="102"/>
        <end position="108"/>
    </location>
</feature>
<feature type="strand" evidence="3">
    <location>
        <begin position="110"/>
        <end position="121"/>
    </location>
</feature>
<feature type="strand" evidence="3">
    <location>
        <begin position="124"/>
        <end position="132"/>
    </location>
</feature>
<feature type="strand" evidence="3">
    <location>
        <begin position="138"/>
        <end position="147"/>
    </location>
</feature>
<feature type="strand" evidence="3">
    <location>
        <begin position="153"/>
        <end position="162"/>
    </location>
</feature>
<feature type="strand" evidence="3">
    <location>
        <begin position="165"/>
        <end position="170"/>
    </location>
</feature>
<feature type="strand" evidence="3">
    <location>
        <begin position="173"/>
        <end position="180"/>
    </location>
</feature>
<feature type="strand" evidence="3">
    <location>
        <begin position="185"/>
        <end position="190"/>
    </location>
</feature>
<feature type="helix" evidence="3">
    <location>
        <begin position="194"/>
        <end position="196"/>
    </location>
</feature>
<feature type="strand" evidence="3">
    <location>
        <begin position="198"/>
        <end position="203"/>
    </location>
</feature>
<feature type="strand" evidence="3">
    <location>
        <begin position="205"/>
        <end position="209"/>
    </location>
</feature>
<feature type="helix" evidence="3">
    <location>
        <begin position="210"/>
        <end position="212"/>
    </location>
</feature>
<feature type="helix" evidence="3">
    <location>
        <begin position="213"/>
        <end position="222"/>
    </location>
</feature>
<organismHost>
    <name type="scientific">Bos taurus</name>
    <name type="common">Bovine</name>
    <dbReference type="NCBI Taxonomy" id="9913"/>
</organismHost>
<reference key="1">
    <citation type="journal article" date="2002" name="Virus Genes">
        <title>Sequence analysis of the VP4, VP6, VP7, and NSP4 gene products of the bovine rotavirus WC3.</title>
        <authorList>
            <person name="Ciarlet M."/>
            <person name="Hyser J.M."/>
            <person name="Estes M.K."/>
        </authorList>
    </citation>
    <scope>NUCLEOTIDE SEQUENCE [MRNA]</scope>
</reference>
<reference key="2">
    <citation type="journal article" date="2002" name="J. Virol.">
        <title>Initial interaction of rotavirus strains with N-acetylneuraminic (sialic) acid residues on the cell surface correlates with VP4 genotype, not species of origin.</title>
        <authorList>
            <person name="Ciarlet M."/>
            <person name="Ludert J.E."/>
            <person name="Iturriza-Gomara M."/>
            <person name="Liprandi F."/>
            <person name="Gray J.J."/>
            <person name="Desselberger U."/>
            <person name="Estes M.K."/>
        </authorList>
    </citation>
    <scope>SIALIC ACID INDEPENDENCY</scope>
</reference>
<keyword id="KW-0002">3D-structure</keyword>
<keyword id="KW-0167">Capsid protein</keyword>
<keyword id="KW-0175">Coiled coil</keyword>
<keyword id="KW-1015">Disulfide bond</keyword>
<keyword id="KW-0348">Hemagglutinin</keyword>
<keyword id="KW-1032">Host cell membrane</keyword>
<keyword id="KW-1035">Host cytoplasm</keyword>
<keyword id="KW-1037">Host cytoskeleton</keyword>
<keyword id="KW-1038">Host endoplasmic reticulum</keyword>
<keyword id="KW-1043">Host membrane</keyword>
<keyword id="KW-0945">Host-virus interaction</keyword>
<keyword id="KW-0472">Membrane</keyword>
<keyword id="KW-1152">Outer capsid protein</keyword>
<keyword id="KW-1161">Viral attachment to host cell</keyword>
<keyword id="KW-1162">Viral penetration into host cytoplasm</keyword>
<keyword id="KW-1173">Viral penetration via permeabilization of host membrane</keyword>
<keyword id="KW-0946">Virion</keyword>
<keyword id="KW-1160">Virus entry into host cell</keyword>
<dbReference type="EMBL" id="AY050271">
    <property type="protein sequence ID" value="AAL11027.1"/>
    <property type="molecule type" value="mRNA"/>
</dbReference>
<dbReference type="PDB" id="7F0H">
    <property type="method" value="X-ray"/>
    <property type="resolution" value="1.70 A"/>
    <property type="chains" value="A/B=64-224"/>
</dbReference>
<dbReference type="PDBsum" id="7F0H"/>
<dbReference type="SMR" id="Q8JNB4"/>
<dbReference type="Proteomes" id="UP000007181">
    <property type="component" value="Genome"/>
</dbReference>
<dbReference type="GO" id="GO:0044172">
    <property type="term" value="C:host cell endoplasmic reticulum-Golgi intermediate compartment"/>
    <property type="evidence" value="ECO:0007669"/>
    <property type="project" value="UniProtKB-SubCell"/>
</dbReference>
<dbReference type="GO" id="GO:0020002">
    <property type="term" value="C:host cell plasma membrane"/>
    <property type="evidence" value="ECO:0007669"/>
    <property type="project" value="UniProtKB-SubCell"/>
</dbReference>
<dbReference type="GO" id="GO:0044168">
    <property type="term" value="C:host cell rough endoplasmic reticulum"/>
    <property type="evidence" value="ECO:0007669"/>
    <property type="project" value="UniProtKB-SubCell"/>
</dbReference>
<dbReference type="GO" id="GO:0044163">
    <property type="term" value="C:host cytoskeleton"/>
    <property type="evidence" value="ECO:0007669"/>
    <property type="project" value="UniProtKB-SubCell"/>
</dbReference>
<dbReference type="GO" id="GO:0016020">
    <property type="term" value="C:membrane"/>
    <property type="evidence" value="ECO:0007669"/>
    <property type="project" value="UniProtKB-KW"/>
</dbReference>
<dbReference type="GO" id="GO:0039624">
    <property type="term" value="C:viral outer capsid"/>
    <property type="evidence" value="ECO:0007669"/>
    <property type="project" value="UniProtKB-UniRule"/>
</dbReference>
<dbReference type="GO" id="GO:0039665">
    <property type="term" value="P:permeabilization of host organelle membrane involved in viral entry into host cell"/>
    <property type="evidence" value="ECO:0007669"/>
    <property type="project" value="UniProtKB-UniRule"/>
</dbReference>
<dbReference type="GO" id="GO:0019062">
    <property type="term" value="P:virion attachment to host cell"/>
    <property type="evidence" value="ECO:0007669"/>
    <property type="project" value="UniProtKB-UniRule"/>
</dbReference>
<dbReference type="Gene3D" id="1.20.5.170">
    <property type="match status" value="1"/>
</dbReference>
<dbReference type="Gene3D" id="2.60.120.200">
    <property type="match status" value="1"/>
</dbReference>
<dbReference type="HAMAP" id="MF_04132">
    <property type="entry name" value="Rota_A_VP4"/>
    <property type="match status" value="1"/>
</dbReference>
<dbReference type="HAMAP" id="MF_04125">
    <property type="entry name" value="Rota_VP4"/>
    <property type="match status" value="1"/>
</dbReference>
<dbReference type="InterPro" id="IPR013320">
    <property type="entry name" value="ConA-like_dom_sf"/>
</dbReference>
<dbReference type="InterPro" id="IPR042546">
    <property type="entry name" value="Rota_A_VP4"/>
</dbReference>
<dbReference type="InterPro" id="IPR035330">
    <property type="entry name" value="Rota_VP4_MID"/>
</dbReference>
<dbReference type="InterPro" id="IPR038017">
    <property type="entry name" value="Rota_VP4_MID_sf"/>
</dbReference>
<dbReference type="InterPro" id="IPR000416">
    <property type="entry name" value="VP4_concanavalin-like"/>
</dbReference>
<dbReference type="InterPro" id="IPR035329">
    <property type="entry name" value="VP4_helical"/>
</dbReference>
<dbReference type="Pfam" id="PF17477">
    <property type="entry name" value="Rota_VP4_MID"/>
    <property type="match status" value="1"/>
</dbReference>
<dbReference type="Pfam" id="PF00426">
    <property type="entry name" value="VP4_haemagglut"/>
    <property type="match status" value="1"/>
</dbReference>
<dbReference type="Pfam" id="PF17478">
    <property type="entry name" value="VP4_helical"/>
    <property type="match status" value="1"/>
</dbReference>
<dbReference type="SUPFAM" id="SSF49899">
    <property type="entry name" value="Concanavalin A-like lectins/glucanases"/>
    <property type="match status" value="1"/>
</dbReference>
<dbReference type="SUPFAM" id="SSF111379">
    <property type="entry name" value="VP4 membrane interaction domain"/>
    <property type="match status" value="1"/>
</dbReference>
<organism>
    <name type="scientific">Rotavirus A (strain RVA/Cow/United States/WC3/1981/G6P7[5])</name>
    <name type="common">RV-A</name>
    <name type="synonym">Rotavirus (strain Wistar calf 3)</name>
    <dbReference type="NCBI Taxonomy" id="578828"/>
    <lineage>
        <taxon>Viruses</taxon>
        <taxon>Riboviria</taxon>
        <taxon>Orthornavirae</taxon>
        <taxon>Duplornaviricota</taxon>
        <taxon>Resentoviricetes</taxon>
        <taxon>Reovirales</taxon>
        <taxon>Sedoreoviridae</taxon>
        <taxon>Rotavirus</taxon>
        <taxon>Rotavirus A</taxon>
    </lineage>
</organism>
<proteinExistence type="evidence at protein level"/>